<comment type="function">
    <text evidence="1">Catalyzes the 2-thiolation of uridine at the wobble position (U34) of tRNA, leading to the formation of s(2)U34.</text>
</comment>
<comment type="catalytic activity">
    <reaction evidence="1">
        <text>S-sulfanyl-L-cysteinyl-[protein] + uridine(34) in tRNA + AH2 + ATP = 2-thiouridine(34) in tRNA + L-cysteinyl-[protein] + A + AMP + diphosphate + H(+)</text>
        <dbReference type="Rhea" id="RHEA:47032"/>
        <dbReference type="Rhea" id="RHEA-COMP:10131"/>
        <dbReference type="Rhea" id="RHEA-COMP:11726"/>
        <dbReference type="Rhea" id="RHEA-COMP:11727"/>
        <dbReference type="Rhea" id="RHEA-COMP:11728"/>
        <dbReference type="ChEBI" id="CHEBI:13193"/>
        <dbReference type="ChEBI" id="CHEBI:15378"/>
        <dbReference type="ChEBI" id="CHEBI:17499"/>
        <dbReference type="ChEBI" id="CHEBI:29950"/>
        <dbReference type="ChEBI" id="CHEBI:30616"/>
        <dbReference type="ChEBI" id="CHEBI:33019"/>
        <dbReference type="ChEBI" id="CHEBI:61963"/>
        <dbReference type="ChEBI" id="CHEBI:65315"/>
        <dbReference type="ChEBI" id="CHEBI:87170"/>
        <dbReference type="ChEBI" id="CHEBI:456215"/>
        <dbReference type="EC" id="2.8.1.13"/>
    </reaction>
</comment>
<comment type="subcellular location">
    <subcellularLocation>
        <location evidence="1">Cytoplasm</location>
    </subcellularLocation>
</comment>
<comment type="similarity">
    <text evidence="1">Belongs to the MnmA/TRMU family.</text>
</comment>
<reference key="1">
    <citation type="journal article" date="2001" name="Lancet">
        <title>Whole genome sequencing of meticillin-resistant Staphylococcus aureus.</title>
        <authorList>
            <person name="Kuroda M."/>
            <person name="Ohta T."/>
            <person name="Uchiyama I."/>
            <person name="Baba T."/>
            <person name="Yuzawa H."/>
            <person name="Kobayashi I."/>
            <person name="Cui L."/>
            <person name="Oguchi A."/>
            <person name="Aoki K."/>
            <person name="Nagai Y."/>
            <person name="Lian J.-Q."/>
            <person name="Ito T."/>
            <person name="Kanamori M."/>
            <person name="Matsumaru H."/>
            <person name="Maruyama A."/>
            <person name="Murakami H."/>
            <person name="Hosoyama A."/>
            <person name="Mizutani-Ui Y."/>
            <person name="Takahashi N.K."/>
            <person name="Sawano T."/>
            <person name="Inoue R."/>
            <person name="Kaito C."/>
            <person name="Sekimizu K."/>
            <person name="Hirakawa H."/>
            <person name="Kuhara S."/>
            <person name="Goto S."/>
            <person name="Yabuzaki J."/>
            <person name="Kanehisa M."/>
            <person name="Yamashita A."/>
            <person name="Oshima K."/>
            <person name="Furuya K."/>
            <person name="Yoshino C."/>
            <person name="Shiba T."/>
            <person name="Hattori M."/>
            <person name="Ogasawara N."/>
            <person name="Hayashi H."/>
            <person name="Hiramatsu K."/>
        </authorList>
    </citation>
    <scope>NUCLEOTIDE SEQUENCE [LARGE SCALE GENOMIC DNA]</scope>
    <source>
        <strain>Mu50 / ATCC 700699</strain>
    </source>
</reference>
<gene>
    <name evidence="1" type="primary">mnmA</name>
    <name type="synonym">trmU</name>
    <name type="ordered locus">SAV1621</name>
</gene>
<proteinExistence type="inferred from homology"/>
<keyword id="KW-0067">ATP-binding</keyword>
<keyword id="KW-0963">Cytoplasm</keyword>
<keyword id="KW-1015">Disulfide bond</keyword>
<keyword id="KW-0547">Nucleotide-binding</keyword>
<keyword id="KW-0694">RNA-binding</keyword>
<keyword id="KW-0808">Transferase</keyword>
<keyword id="KW-0819">tRNA processing</keyword>
<keyword id="KW-0820">tRNA-binding</keyword>
<organism>
    <name type="scientific">Staphylococcus aureus (strain Mu50 / ATCC 700699)</name>
    <dbReference type="NCBI Taxonomy" id="158878"/>
    <lineage>
        <taxon>Bacteria</taxon>
        <taxon>Bacillati</taxon>
        <taxon>Bacillota</taxon>
        <taxon>Bacilli</taxon>
        <taxon>Bacillales</taxon>
        <taxon>Staphylococcaceae</taxon>
        <taxon>Staphylococcus</taxon>
    </lineage>
</organism>
<name>MNMA_STAAM</name>
<feature type="chain" id="PRO_0000121674" description="tRNA-specific 2-thiouridylase MnmA">
    <location>
        <begin position="1"/>
        <end position="372"/>
    </location>
</feature>
<feature type="region of interest" description="Interaction with target base in tRNA" evidence="1">
    <location>
        <begin position="97"/>
        <end position="99"/>
    </location>
</feature>
<feature type="region of interest" description="Interaction with tRNA" evidence="1">
    <location>
        <begin position="149"/>
        <end position="151"/>
    </location>
</feature>
<feature type="region of interest" description="Interaction with tRNA" evidence="1">
    <location>
        <begin position="309"/>
        <end position="310"/>
    </location>
</feature>
<feature type="active site" description="Nucleophile" evidence="1">
    <location>
        <position position="102"/>
    </location>
</feature>
<feature type="active site" description="Cysteine persulfide intermediate" evidence="1">
    <location>
        <position position="199"/>
    </location>
</feature>
<feature type="binding site" evidence="1">
    <location>
        <begin position="11"/>
        <end position="18"/>
    </location>
    <ligand>
        <name>ATP</name>
        <dbReference type="ChEBI" id="CHEBI:30616"/>
    </ligand>
</feature>
<feature type="binding site" evidence="1">
    <location>
        <position position="37"/>
    </location>
    <ligand>
        <name>ATP</name>
        <dbReference type="ChEBI" id="CHEBI:30616"/>
    </ligand>
</feature>
<feature type="binding site" evidence="1">
    <location>
        <position position="126"/>
    </location>
    <ligand>
        <name>ATP</name>
        <dbReference type="ChEBI" id="CHEBI:30616"/>
    </ligand>
</feature>
<feature type="site" description="Interaction with tRNA" evidence="1">
    <location>
        <position position="127"/>
    </location>
</feature>
<feature type="site" description="Interaction with tRNA" evidence="1">
    <location>
        <position position="342"/>
    </location>
</feature>
<feature type="disulfide bond" description="Alternate" evidence="1">
    <location>
        <begin position="102"/>
        <end position="199"/>
    </location>
</feature>
<sequence>MSNKDIRVVVGMSGGVDSSVTAHVLKEQGYDVIGIFMKNWDDTDENGVCTATEDYNDVIEVCNQIGIPYYAVNFEKEYWDKVFTYFLDEYKKGRTPNPDVMCNKEIKFKAFLDHAMNLGADYVATGHYARIHRHEDGHVEMLRGVDNNKDQTYFLNQLSQQQLSKVMFPIGDIEKSEVRRIAEEQGLVTAKKKDSTGICFIGEKNFKTFLSQYLPAQPGDMITLDGKKMGKHSGLMYYTIGQRHGLGIGGDGDPWFVVGKNLKDNVLYVEQGFHHDALYSDYLIASDYSFVNPEDNDLDQGFECTAKFRYRQKDTKVFVKRENDHALRVTFAEPVRAITPGQAVVFYQGDVCLGGATIDDVFKNEGQLNFVV</sequence>
<evidence type="ECO:0000255" key="1">
    <source>
        <dbReference type="HAMAP-Rule" id="MF_00144"/>
    </source>
</evidence>
<accession>Q931Q6</accession>
<dbReference type="EC" id="2.8.1.13" evidence="1"/>
<dbReference type="EMBL" id="BA000017">
    <property type="protein sequence ID" value="BAB57783.1"/>
    <property type="molecule type" value="Genomic_DNA"/>
</dbReference>
<dbReference type="RefSeq" id="WP_000066096.1">
    <property type="nucleotide sequence ID" value="NC_002758.2"/>
</dbReference>
<dbReference type="SMR" id="Q931Q6"/>
<dbReference type="KEGG" id="sav:SAV1621"/>
<dbReference type="HOGENOM" id="CLU_035188_1_0_9"/>
<dbReference type="PhylomeDB" id="Q931Q6"/>
<dbReference type="Proteomes" id="UP000002481">
    <property type="component" value="Chromosome"/>
</dbReference>
<dbReference type="GO" id="GO:0005737">
    <property type="term" value="C:cytoplasm"/>
    <property type="evidence" value="ECO:0007669"/>
    <property type="project" value="UniProtKB-SubCell"/>
</dbReference>
<dbReference type="GO" id="GO:0005524">
    <property type="term" value="F:ATP binding"/>
    <property type="evidence" value="ECO:0007669"/>
    <property type="project" value="UniProtKB-KW"/>
</dbReference>
<dbReference type="GO" id="GO:0000049">
    <property type="term" value="F:tRNA binding"/>
    <property type="evidence" value="ECO:0007669"/>
    <property type="project" value="UniProtKB-KW"/>
</dbReference>
<dbReference type="GO" id="GO:0103016">
    <property type="term" value="F:tRNA-uridine 2-sulfurtransferase activity"/>
    <property type="evidence" value="ECO:0007669"/>
    <property type="project" value="UniProtKB-EC"/>
</dbReference>
<dbReference type="GO" id="GO:0002143">
    <property type="term" value="P:tRNA wobble position uridine thiolation"/>
    <property type="evidence" value="ECO:0007669"/>
    <property type="project" value="TreeGrafter"/>
</dbReference>
<dbReference type="CDD" id="cd01998">
    <property type="entry name" value="MnmA_TRMU-like"/>
    <property type="match status" value="1"/>
</dbReference>
<dbReference type="FunFam" id="2.30.30.280:FF:000001">
    <property type="entry name" value="tRNA-specific 2-thiouridylase MnmA"/>
    <property type="match status" value="1"/>
</dbReference>
<dbReference type="FunFam" id="2.40.30.10:FF:000023">
    <property type="entry name" value="tRNA-specific 2-thiouridylase MnmA"/>
    <property type="match status" value="1"/>
</dbReference>
<dbReference type="FunFam" id="3.40.50.620:FF:000004">
    <property type="entry name" value="tRNA-specific 2-thiouridylase MnmA"/>
    <property type="match status" value="1"/>
</dbReference>
<dbReference type="Gene3D" id="2.30.30.280">
    <property type="entry name" value="Adenine nucleotide alpha hydrolases-like domains"/>
    <property type="match status" value="1"/>
</dbReference>
<dbReference type="Gene3D" id="3.40.50.620">
    <property type="entry name" value="HUPs"/>
    <property type="match status" value="1"/>
</dbReference>
<dbReference type="Gene3D" id="2.40.30.10">
    <property type="entry name" value="Translation factors"/>
    <property type="match status" value="1"/>
</dbReference>
<dbReference type="HAMAP" id="MF_00144">
    <property type="entry name" value="tRNA_thiouridyl_MnmA"/>
    <property type="match status" value="1"/>
</dbReference>
<dbReference type="InterPro" id="IPR004506">
    <property type="entry name" value="MnmA-like"/>
</dbReference>
<dbReference type="InterPro" id="IPR046885">
    <property type="entry name" value="MnmA-like_C"/>
</dbReference>
<dbReference type="InterPro" id="IPR046884">
    <property type="entry name" value="MnmA-like_central"/>
</dbReference>
<dbReference type="InterPro" id="IPR023382">
    <property type="entry name" value="MnmA-like_central_sf"/>
</dbReference>
<dbReference type="InterPro" id="IPR014729">
    <property type="entry name" value="Rossmann-like_a/b/a_fold"/>
</dbReference>
<dbReference type="NCBIfam" id="NF001138">
    <property type="entry name" value="PRK00143.1"/>
    <property type="match status" value="1"/>
</dbReference>
<dbReference type="NCBIfam" id="TIGR00420">
    <property type="entry name" value="trmU"/>
    <property type="match status" value="1"/>
</dbReference>
<dbReference type="PANTHER" id="PTHR11933:SF5">
    <property type="entry name" value="MITOCHONDRIAL TRNA-SPECIFIC 2-THIOURIDYLASE 1"/>
    <property type="match status" value="1"/>
</dbReference>
<dbReference type="PANTHER" id="PTHR11933">
    <property type="entry name" value="TRNA 5-METHYLAMINOMETHYL-2-THIOURIDYLATE -METHYLTRANSFERASE"/>
    <property type="match status" value="1"/>
</dbReference>
<dbReference type="Pfam" id="PF03054">
    <property type="entry name" value="tRNA_Me_trans"/>
    <property type="match status" value="1"/>
</dbReference>
<dbReference type="Pfam" id="PF20258">
    <property type="entry name" value="tRNA_Me_trans_C"/>
    <property type="match status" value="1"/>
</dbReference>
<dbReference type="Pfam" id="PF20259">
    <property type="entry name" value="tRNA_Me_trans_M"/>
    <property type="match status" value="1"/>
</dbReference>
<dbReference type="SUPFAM" id="SSF52402">
    <property type="entry name" value="Adenine nucleotide alpha hydrolases-like"/>
    <property type="match status" value="1"/>
</dbReference>
<protein>
    <recommendedName>
        <fullName evidence="1">tRNA-specific 2-thiouridylase MnmA</fullName>
        <ecNumber evidence="1">2.8.1.13</ecNumber>
    </recommendedName>
</protein>